<name>Y2269_STAAN</name>
<proteinExistence type="evidence at protein level"/>
<gene>
    <name type="ordered locus">SA2269</name>
</gene>
<organism>
    <name type="scientific">Staphylococcus aureus (strain N315)</name>
    <dbReference type="NCBI Taxonomy" id="158879"/>
    <lineage>
        <taxon>Bacteria</taxon>
        <taxon>Bacillati</taxon>
        <taxon>Bacillota</taxon>
        <taxon>Bacilli</taxon>
        <taxon>Bacillales</taxon>
        <taxon>Staphylococcaceae</taxon>
        <taxon>Staphylococcus</taxon>
    </lineage>
</organism>
<dbReference type="EMBL" id="BA000018">
    <property type="protein sequence ID" value="BAB43572.1"/>
    <property type="molecule type" value="Genomic_DNA"/>
</dbReference>
<dbReference type="PIR" id="B90051">
    <property type="entry name" value="B90051"/>
</dbReference>
<dbReference type="RefSeq" id="WP_000581894.1">
    <property type="nucleotide sequence ID" value="NC_002745.2"/>
</dbReference>
<dbReference type="SMR" id="Q7A3L7"/>
<dbReference type="EnsemblBacteria" id="BAB43572">
    <property type="protein sequence ID" value="BAB43572"/>
    <property type="gene ID" value="BAB43572"/>
</dbReference>
<dbReference type="KEGG" id="sau:SA2269"/>
<dbReference type="HOGENOM" id="CLU_071589_0_1_9"/>
<dbReference type="GO" id="GO:0005886">
    <property type="term" value="C:plasma membrane"/>
    <property type="evidence" value="ECO:0007669"/>
    <property type="project" value="UniProtKB-SubCell"/>
</dbReference>
<dbReference type="Gene3D" id="2.50.20.40">
    <property type="match status" value="1"/>
</dbReference>
<dbReference type="InterPro" id="IPR007595">
    <property type="entry name" value="Csa"/>
</dbReference>
<dbReference type="InterPro" id="IPR038641">
    <property type="entry name" value="Csa_sf"/>
</dbReference>
<dbReference type="NCBIfam" id="TIGR01742">
    <property type="entry name" value="SA_tandem_lipo"/>
    <property type="match status" value="1"/>
</dbReference>
<dbReference type="Pfam" id="PF04507">
    <property type="entry name" value="DUF576"/>
    <property type="match status" value="1"/>
</dbReference>
<feature type="chain" id="PRO_0000282138" description="Uncharacterized protein SA2269">
    <location>
        <begin position="1"/>
        <end position="264"/>
    </location>
</feature>
<feature type="transmembrane region" description="Helical" evidence="1">
    <location>
        <begin position="7"/>
        <end position="27"/>
    </location>
</feature>
<keyword id="KW-1003">Cell membrane</keyword>
<keyword id="KW-0472">Membrane</keyword>
<keyword id="KW-0812">Transmembrane</keyword>
<keyword id="KW-1133">Transmembrane helix</keyword>
<protein>
    <recommendedName>
        <fullName>Uncharacterized protein SA2269</fullName>
    </recommendedName>
</protein>
<accession>Q7A3L7</accession>
<sequence>MIHSKKLTLGICLVLLIILIVGYVIMTKTNGRNAQIKDTFNQTLKLYPTKNLDDFYDKEGFRDQEFKKGDKGTWIVNSEMVIEPKGKDMETRGMVLYINRNTRTTKGYYFISEMTDDSNGRPKDDEKRYPVKMEHNKIIPTKPLPNDKLRKEIENFKFFVQYGDFKDINDYKDGDISYNPNVPSYSAKYQLKNDDYNVKQLRKRYNIPTNKAPKLLIKGDGDLKGSSVGSKNLEFTFVENKEENIYFTDSVQYTSSEDTSYESN</sequence>
<evidence type="ECO:0000255" key="1"/>
<evidence type="ECO:0000305" key="2"/>
<reference key="1">
    <citation type="journal article" date="2001" name="Lancet">
        <title>Whole genome sequencing of meticillin-resistant Staphylococcus aureus.</title>
        <authorList>
            <person name="Kuroda M."/>
            <person name="Ohta T."/>
            <person name="Uchiyama I."/>
            <person name="Baba T."/>
            <person name="Yuzawa H."/>
            <person name="Kobayashi I."/>
            <person name="Cui L."/>
            <person name="Oguchi A."/>
            <person name="Aoki K."/>
            <person name="Nagai Y."/>
            <person name="Lian J.-Q."/>
            <person name="Ito T."/>
            <person name="Kanamori M."/>
            <person name="Matsumaru H."/>
            <person name="Maruyama A."/>
            <person name="Murakami H."/>
            <person name="Hosoyama A."/>
            <person name="Mizutani-Ui Y."/>
            <person name="Takahashi N.K."/>
            <person name="Sawano T."/>
            <person name="Inoue R."/>
            <person name="Kaito C."/>
            <person name="Sekimizu K."/>
            <person name="Hirakawa H."/>
            <person name="Kuhara S."/>
            <person name="Goto S."/>
            <person name="Yabuzaki J."/>
            <person name="Kanehisa M."/>
            <person name="Yamashita A."/>
            <person name="Oshima K."/>
            <person name="Furuya K."/>
            <person name="Yoshino C."/>
            <person name="Shiba T."/>
            <person name="Hattori M."/>
            <person name="Ogasawara N."/>
            <person name="Hayashi H."/>
            <person name="Hiramatsu K."/>
        </authorList>
    </citation>
    <scope>NUCLEOTIDE SEQUENCE [LARGE SCALE GENOMIC DNA]</scope>
    <source>
        <strain>N315</strain>
    </source>
</reference>
<reference key="2">
    <citation type="submission" date="2007-10" db="UniProtKB">
        <title>Shotgun proteomic analysis of total and membrane protein extracts of S. aureus strain N315.</title>
        <authorList>
            <person name="Vaezzadeh A.R."/>
            <person name="Deshusses J."/>
            <person name="Lescuyer P."/>
            <person name="Hochstrasser D.F."/>
        </authorList>
    </citation>
    <scope>IDENTIFICATION BY MASS SPECTROMETRY [LARGE SCALE ANALYSIS]</scope>
    <source>
        <strain>N315</strain>
    </source>
</reference>
<comment type="subcellular location">
    <subcellularLocation>
        <location evidence="2">Cell membrane</location>
        <topology evidence="2">Single-pass membrane protein</topology>
    </subcellularLocation>
</comment>
<comment type="similarity">
    <text evidence="2">Belongs to the staphylococcal tandem lipoprotein family.</text>
</comment>